<gene>
    <name evidence="1" type="primary">rpmF</name>
    <name type="ordered locus">MS53_0163</name>
</gene>
<dbReference type="EMBL" id="AE017245">
    <property type="protein sequence ID" value="AAZ43583.1"/>
    <property type="molecule type" value="Genomic_DNA"/>
</dbReference>
<dbReference type="RefSeq" id="WP_011283326.1">
    <property type="nucleotide sequence ID" value="NC_007294.1"/>
</dbReference>
<dbReference type="SMR" id="Q4A6N8"/>
<dbReference type="STRING" id="262723.MS53_0163"/>
<dbReference type="GeneID" id="93529978"/>
<dbReference type="KEGG" id="msy:MS53_0163"/>
<dbReference type="eggNOG" id="COG0333">
    <property type="taxonomic scope" value="Bacteria"/>
</dbReference>
<dbReference type="HOGENOM" id="CLU_129084_1_3_14"/>
<dbReference type="OrthoDB" id="9812874at2"/>
<dbReference type="Proteomes" id="UP000000549">
    <property type="component" value="Chromosome"/>
</dbReference>
<dbReference type="GO" id="GO:0015934">
    <property type="term" value="C:large ribosomal subunit"/>
    <property type="evidence" value="ECO:0007669"/>
    <property type="project" value="InterPro"/>
</dbReference>
<dbReference type="GO" id="GO:0003735">
    <property type="term" value="F:structural constituent of ribosome"/>
    <property type="evidence" value="ECO:0007669"/>
    <property type="project" value="InterPro"/>
</dbReference>
<dbReference type="GO" id="GO:0006412">
    <property type="term" value="P:translation"/>
    <property type="evidence" value="ECO:0007669"/>
    <property type="project" value="UniProtKB-UniRule"/>
</dbReference>
<dbReference type="HAMAP" id="MF_00340">
    <property type="entry name" value="Ribosomal_bL32"/>
    <property type="match status" value="1"/>
</dbReference>
<dbReference type="InterPro" id="IPR002677">
    <property type="entry name" value="Ribosomal_bL32"/>
</dbReference>
<dbReference type="InterPro" id="IPR044957">
    <property type="entry name" value="Ribosomal_bL32_bact"/>
</dbReference>
<dbReference type="InterPro" id="IPR011332">
    <property type="entry name" value="Ribosomal_zn-bd"/>
</dbReference>
<dbReference type="NCBIfam" id="TIGR01031">
    <property type="entry name" value="rpmF_bact"/>
    <property type="match status" value="1"/>
</dbReference>
<dbReference type="PANTHER" id="PTHR35534">
    <property type="entry name" value="50S RIBOSOMAL PROTEIN L32"/>
    <property type="match status" value="1"/>
</dbReference>
<dbReference type="PANTHER" id="PTHR35534:SF1">
    <property type="entry name" value="LARGE RIBOSOMAL SUBUNIT PROTEIN BL32"/>
    <property type="match status" value="1"/>
</dbReference>
<dbReference type="Pfam" id="PF01783">
    <property type="entry name" value="Ribosomal_L32p"/>
    <property type="match status" value="1"/>
</dbReference>
<dbReference type="SUPFAM" id="SSF57829">
    <property type="entry name" value="Zn-binding ribosomal proteins"/>
    <property type="match status" value="1"/>
</dbReference>
<name>RL32_MYCS5</name>
<protein>
    <recommendedName>
        <fullName evidence="1">Large ribosomal subunit protein bL32</fullName>
    </recommendedName>
    <alternativeName>
        <fullName evidence="3">50S ribosomal protein L32</fullName>
    </alternativeName>
</protein>
<keyword id="KW-1185">Reference proteome</keyword>
<keyword id="KW-0687">Ribonucleoprotein</keyword>
<keyword id="KW-0689">Ribosomal protein</keyword>
<feature type="chain" id="PRO_0000225741" description="Large ribosomal subunit protein bL32">
    <location>
        <begin position="1"/>
        <end position="66"/>
    </location>
</feature>
<feature type="region of interest" description="Disordered" evidence="2">
    <location>
        <begin position="1"/>
        <end position="21"/>
    </location>
</feature>
<feature type="compositionally biased region" description="Basic residues" evidence="2">
    <location>
        <begin position="1"/>
        <end position="19"/>
    </location>
</feature>
<sequence>MAIVPKRKTSKQRKHKRNTHSALDAQNLVTCKNCTSMIEQHVTCYRCGFYKGKKVAGYTCLNDRVQ</sequence>
<comment type="similarity">
    <text evidence="1">Belongs to the bacterial ribosomal protein bL32 family.</text>
</comment>
<proteinExistence type="inferred from homology"/>
<reference key="1">
    <citation type="journal article" date="2005" name="J. Bacteriol.">
        <title>Swine and poultry pathogens: the complete genome sequences of two strains of Mycoplasma hyopneumoniae and a strain of Mycoplasma synoviae.</title>
        <authorList>
            <person name="Vasconcelos A.T.R."/>
            <person name="Ferreira H.B."/>
            <person name="Bizarro C.V."/>
            <person name="Bonatto S.L."/>
            <person name="Carvalho M.O."/>
            <person name="Pinto P.M."/>
            <person name="Almeida D.F."/>
            <person name="Almeida L.G.P."/>
            <person name="Almeida R."/>
            <person name="Alves-Junior L."/>
            <person name="Assuncao E.N."/>
            <person name="Azevedo V.A.C."/>
            <person name="Bogo M.R."/>
            <person name="Brigido M.M."/>
            <person name="Brocchi M."/>
            <person name="Burity H.A."/>
            <person name="Camargo A.A."/>
            <person name="Camargo S.S."/>
            <person name="Carepo M.S."/>
            <person name="Carraro D.M."/>
            <person name="de Mattos Cascardo J.C."/>
            <person name="Castro L.A."/>
            <person name="Cavalcanti G."/>
            <person name="Chemale G."/>
            <person name="Collevatti R.G."/>
            <person name="Cunha C.W."/>
            <person name="Dallagiovanna B."/>
            <person name="Dambros B.P."/>
            <person name="Dellagostin O.A."/>
            <person name="Falcao C."/>
            <person name="Fantinatti-Garboggini F."/>
            <person name="Felipe M.S.S."/>
            <person name="Fiorentin L."/>
            <person name="Franco G.R."/>
            <person name="Freitas N.S.A."/>
            <person name="Frias D."/>
            <person name="Grangeiro T.B."/>
            <person name="Grisard E.C."/>
            <person name="Guimaraes C.T."/>
            <person name="Hungria M."/>
            <person name="Jardim S.N."/>
            <person name="Krieger M.A."/>
            <person name="Laurino J.P."/>
            <person name="Lima L.F.A."/>
            <person name="Lopes M.I."/>
            <person name="Loreto E.L.S."/>
            <person name="Madeira H.M.F."/>
            <person name="Manfio G.P."/>
            <person name="Maranhao A.Q."/>
            <person name="Martinkovics C.T."/>
            <person name="Medeiros S.R.B."/>
            <person name="Moreira M.A.M."/>
            <person name="Neiva M."/>
            <person name="Ramalho-Neto C.E."/>
            <person name="Nicolas M.F."/>
            <person name="Oliveira S.C."/>
            <person name="Paixao R.F.C."/>
            <person name="Pedrosa F.O."/>
            <person name="Pena S.D.J."/>
            <person name="Pereira M."/>
            <person name="Pereira-Ferrari L."/>
            <person name="Piffer I."/>
            <person name="Pinto L.S."/>
            <person name="Potrich D.P."/>
            <person name="Salim A.C.M."/>
            <person name="Santos F.R."/>
            <person name="Schmitt R."/>
            <person name="Schneider M.P.C."/>
            <person name="Schrank A."/>
            <person name="Schrank I.S."/>
            <person name="Schuck A.F."/>
            <person name="Seuanez H.N."/>
            <person name="Silva D.W."/>
            <person name="Silva R."/>
            <person name="Silva S.C."/>
            <person name="Soares C.M.A."/>
            <person name="Souza K.R.L."/>
            <person name="Souza R.C."/>
            <person name="Staats C.C."/>
            <person name="Steffens M.B.R."/>
            <person name="Teixeira S.M.R."/>
            <person name="Urmenyi T.P."/>
            <person name="Vainstein M.H."/>
            <person name="Zuccherato L.W."/>
            <person name="Simpson A.J.G."/>
            <person name="Zaha A."/>
        </authorList>
    </citation>
    <scope>NUCLEOTIDE SEQUENCE [LARGE SCALE GENOMIC DNA]</scope>
    <source>
        <strain>53</strain>
    </source>
</reference>
<accession>Q4A6N8</accession>
<evidence type="ECO:0000255" key="1">
    <source>
        <dbReference type="HAMAP-Rule" id="MF_00340"/>
    </source>
</evidence>
<evidence type="ECO:0000256" key="2">
    <source>
        <dbReference type="SAM" id="MobiDB-lite"/>
    </source>
</evidence>
<evidence type="ECO:0000305" key="3"/>
<organism>
    <name type="scientific">Mycoplasmopsis synoviae (strain 53)</name>
    <name type="common">Mycoplasma synoviae</name>
    <dbReference type="NCBI Taxonomy" id="262723"/>
    <lineage>
        <taxon>Bacteria</taxon>
        <taxon>Bacillati</taxon>
        <taxon>Mycoplasmatota</taxon>
        <taxon>Mycoplasmoidales</taxon>
        <taxon>Metamycoplasmataceae</taxon>
        <taxon>Mycoplasmopsis</taxon>
    </lineage>
</organism>